<sequence>MASRQPSEGSTVLISLILWVIIFALLNIGSNFFRSSEGATILGGFVGSFLFFLQMTFIGAIKRDVKLLETVLAVIITAMISSSVHRVSGTTSIIFSIGWIFYLNHASTKIYSKLEETNTVVSGKKRK</sequence>
<proteinExistence type="inferred from homology"/>
<reference key="1">
    <citation type="journal article" date="2005" name="Nature">
        <title>The genome of the social amoeba Dictyostelium discoideum.</title>
        <authorList>
            <person name="Eichinger L."/>
            <person name="Pachebat J.A."/>
            <person name="Gloeckner G."/>
            <person name="Rajandream M.A."/>
            <person name="Sucgang R."/>
            <person name="Berriman M."/>
            <person name="Song J."/>
            <person name="Olsen R."/>
            <person name="Szafranski K."/>
            <person name="Xu Q."/>
            <person name="Tunggal B."/>
            <person name="Kummerfeld S."/>
            <person name="Madera M."/>
            <person name="Konfortov B.A."/>
            <person name="Rivero F."/>
            <person name="Bankier A.T."/>
            <person name="Lehmann R."/>
            <person name="Hamlin N."/>
            <person name="Davies R."/>
            <person name="Gaudet P."/>
            <person name="Fey P."/>
            <person name="Pilcher K."/>
            <person name="Chen G."/>
            <person name="Saunders D."/>
            <person name="Sodergren E.J."/>
            <person name="Davis P."/>
            <person name="Kerhornou A."/>
            <person name="Nie X."/>
            <person name="Hall N."/>
            <person name="Anjard C."/>
            <person name="Hemphill L."/>
            <person name="Bason N."/>
            <person name="Farbrother P."/>
            <person name="Desany B."/>
            <person name="Just E."/>
            <person name="Morio T."/>
            <person name="Rost R."/>
            <person name="Churcher C.M."/>
            <person name="Cooper J."/>
            <person name="Haydock S."/>
            <person name="van Driessche N."/>
            <person name="Cronin A."/>
            <person name="Goodhead I."/>
            <person name="Muzny D.M."/>
            <person name="Mourier T."/>
            <person name="Pain A."/>
            <person name="Lu M."/>
            <person name="Harper D."/>
            <person name="Lindsay R."/>
            <person name="Hauser H."/>
            <person name="James K.D."/>
            <person name="Quiles M."/>
            <person name="Madan Babu M."/>
            <person name="Saito T."/>
            <person name="Buchrieser C."/>
            <person name="Wardroper A."/>
            <person name="Felder M."/>
            <person name="Thangavelu M."/>
            <person name="Johnson D."/>
            <person name="Knights A."/>
            <person name="Loulseged H."/>
            <person name="Mungall K.L."/>
            <person name="Oliver K."/>
            <person name="Price C."/>
            <person name="Quail M.A."/>
            <person name="Urushihara H."/>
            <person name="Hernandez J."/>
            <person name="Rabbinowitsch E."/>
            <person name="Steffen D."/>
            <person name="Sanders M."/>
            <person name="Ma J."/>
            <person name="Kohara Y."/>
            <person name="Sharp S."/>
            <person name="Simmonds M.N."/>
            <person name="Spiegler S."/>
            <person name="Tivey A."/>
            <person name="Sugano S."/>
            <person name="White B."/>
            <person name="Walker D."/>
            <person name="Woodward J.R."/>
            <person name="Winckler T."/>
            <person name="Tanaka Y."/>
            <person name="Shaulsky G."/>
            <person name="Schleicher M."/>
            <person name="Weinstock G.M."/>
            <person name="Rosenthal A."/>
            <person name="Cox E.C."/>
            <person name="Chisholm R.L."/>
            <person name="Gibbs R.A."/>
            <person name="Loomis W.F."/>
            <person name="Platzer M."/>
            <person name="Kay R.R."/>
            <person name="Williams J.G."/>
            <person name="Dear P.H."/>
            <person name="Noegel A.A."/>
            <person name="Barrell B.G."/>
            <person name="Kuspa A."/>
        </authorList>
    </citation>
    <scope>NUCLEOTIDE SEQUENCE [LARGE SCALE GENOMIC DNA]</scope>
    <source>
        <strain>AX4</strain>
    </source>
</reference>
<protein>
    <recommendedName>
        <fullName>Protein KRTCAP2 homolog</fullName>
    </recommendedName>
    <alternativeName>
        <fullName>Dolichyl-diphosphooligosaccharide--protein glycosyltransferase subunit KCP2</fullName>
        <shortName>Oligosaccharyl transferase subunit KCP2</shortName>
    </alternativeName>
</protein>
<evidence type="ECO:0000250" key="1">
    <source>
        <dbReference type="UniProtKB" id="P86229"/>
    </source>
</evidence>
<evidence type="ECO:0000250" key="2">
    <source>
        <dbReference type="UniProtKB" id="Q8N6L1"/>
    </source>
</evidence>
<evidence type="ECO:0000255" key="3"/>
<evidence type="ECO:0000305" key="4"/>
<organism>
    <name type="scientific">Dictyostelium discoideum</name>
    <name type="common">Social amoeba</name>
    <dbReference type="NCBI Taxonomy" id="44689"/>
    <lineage>
        <taxon>Eukaryota</taxon>
        <taxon>Amoebozoa</taxon>
        <taxon>Evosea</taxon>
        <taxon>Eumycetozoa</taxon>
        <taxon>Dictyostelia</taxon>
        <taxon>Dictyosteliales</taxon>
        <taxon>Dictyosteliaceae</taxon>
        <taxon>Dictyostelium</taxon>
    </lineage>
</organism>
<dbReference type="EMBL" id="AAFI02000089">
    <property type="protein sequence ID" value="EAL64135.1"/>
    <property type="molecule type" value="Genomic_DNA"/>
</dbReference>
<dbReference type="RefSeq" id="XP_637663.1">
    <property type="nucleotide sequence ID" value="XM_632571.1"/>
</dbReference>
<dbReference type="FunCoup" id="Q54L98">
    <property type="interactions" value="19"/>
</dbReference>
<dbReference type="STRING" id="44689.Q54L98"/>
<dbReference type="PaxDb" id="44689-DDB0266488"/>
<dbReference type="EnsemblProtists" id="EAL64135">
    <property type="protein sequence ID" value="EAL64135"/>
    <property type="gene ID" value="DDB_G0286759"/>
</dbReference>
<dbReference type="GeneID" id="8625803"/>
<dbReference type="KEGG" id="ddi:DDB_G0286759"/>
<dbReference type="dictyBase" id="DDB_G0286759"/>
<dbReference type="VEuPathDB" id="AmoebaDB:DDB_G0286759"/>
<dbReference type="eggNOG" id="KOG4615">
    <property type="taxonomic scope" value="Eukaryota"/>
</dbReference>
<dbReference type="HOGENOM" id="CLU_1974669_0_0_1"/>
<dbReference type="InParanoid" id="Q54L98"/>
<dbReference type="OMA" id="ITIYYMN"/>
<dbReference type="PhylomeDB" id="Q54L98"/>
<dbReference type="PRO" id="PR:Q54L98"/>
<dbReference type="Proteomes" id="UP000002195">
    <property type="component" value="Chromosome 4"/>
</dbReference>
<dbReference type="GO" id="GO:0016020">
    <property type="term" value="C:membrane"/>
    <property type="evidence" value="ECO:0007669"/>
    <property type="project" value="UniProtKB-SubCell"/>
</dbReference>
<dbReference type="GO" id="GO:0006487">
    <property type="term" value="P:protein N-linked glycosylation"/>
    <property type="evidence" value="ECO:0000318"/>
    <property type="project" value="GO_Central"/>
</dbReference>
<dbReference type="InterPro" id="IPR018614">
    <property type="entry name" value="KRTCAP2"/>
</dbReference>
<dbReference type="PANTHER" id="PTHR32001">
    <property type="entry name" value="KERATINOCYTE-ASSOCIATED PROTEIN 2"/>
    <property type="match status" value="1"/>
</dbReference>
<dbReference type="PANTHER" id="PTHR32001:SF1">
    <property type="entry name" value="KERATINOCYTE-ASSOCIATED PROTEIN 2"/>
    <property type="match status" value="1"/>
</dbReference>
<dbReference type="Pfam" id="PF09775">
    <property type="entry name" value="Keratin_assoc"/>
    <property type="match status" value="1"/>
</dbReference>
<keyword id="KW-0472">Membrane</keyword>
<keyword id="KW-1185">Reference proteome</keyword>
<keyword id="KW-0812">Transmembrane</keyword>
<keyword id="KW-1133">Transmembrane helix</keyword>
<accession>Q54L98</accession>
<name>KTAP2_DICDI</name>
<comment type="function">
    <text evidence="2">Subunit of the oligosaccharyl transferase (OST) complex that catalyzes the initial transfer of a defined glycan (Glc(3)Man(9)GlcNAc(2) in eukaryotes) from the lipid carrier dolichol-pyrophosphate to an asparagine residue within an Asn-X-Ser/Thr consensus motif in nascent polypeptide chains, the first step in protein N-glycosylation. N-glycosylation occurs cotranslationally and the complex associates with the Sec61 complex at the channel-forming translocon complex that mediates protein translocation across the endoplasmic reticulum (ER). All subunits are required for a maximal enzyme activity.</text>
</comment>
<comment type="subunit">
    <text evidence="1">Component of the oligosaccharyltransferase (OST) complex.</text>
</comment>
<comment type="subcellular location">
    <subcellularLocation>
        <location evidence="4">Membrane</location>
        <topology evidence="4">Multi-pass membrane protein</topology>
    </subcellularLocation>
</comment>
<comment type="similarity">
    <text evidence="4">Belongs to the KRTCAP2 family.</text>
</comment>
<gene>
    <name type="ORF">DDB_G0286759</name>
</gene>
<feature type="chain" id="PRO_0000327905" description="Protein KRTCAP2 homolog">
    <location>
        <begin position="1"/>
        <end position="127"/>
    </location>
</feature>
<feature type="transmembrane region" description="Helical" evidence="3">
    <location>
        <begin position="13"/>
        <end position="33"/>
    </location>
</feature>
<feature type="transmembrane region" description="Helical" evidence="3">
    <location>
        <begin position="41"/>
        <end position="61"/>
    </location>
</feature>
<feature type="transmembrane region" description="Helical" evidence="3">
    <location>
        <begin position="65"/>
        <end position="85"/>
    </location>
</feature>
<feature type="transmembrane region" description="Helical" evidence="3">
    <location>
        <begin position="87"/>
        <end position="107"/>
    </location>
</feature>